<accession>Q73YQ3</accession>
<organism>
    <name type="scientific">Mycolicibacterium paratuberculosis (strain ATCC BAA-968 / K-10)</name>
    <name type="common">Mycobacterium paratuberculosis</name>
    <dbReference type="NCBI Taxonomy" id="262316"/>
    <lineage>
        <taxon>Bacteria</taxon>
        <taxon>Bacillati</taxon>
        <taxon>Actinomycetota</taxon>
        <taxon>Actinomycetes</taxon>
        <taxon>Mycobacteriales</taxon>
        <taxon>Mycobacteriaceae</taxon>
        <taxon>Mycobacterium</taxon>
        <taxon>Mycobacterium avium complex (MAC)</taxon>
    </lineage>
</organism>
<evidence type="ECO:0000255" key="1">
    <source>
        <dbReference type="HAMAP-Rule" id="MF_00208"/>
    </source>
</evidence>
<gene>
    <name evidence="1" type="primary">murE</name>
    <name type="ordered locus">MAP_1902c</name>
</gene>
<feature type="chain" id="PRO_1000058590" description="UDP-N-acetylmuramoyl-L-alanyl-D-glutamate--2,6-diaminopimelate ligase">
    <location>
        <begin position="1"/>
        <end position="520"/>
    </location>
</feature>
<feature type="short sequence motif" description="Meso-diaminopimelate recognition motif">
    <location>
        <begin position="429"/>
        <end position="432"/>
    </location>
</feature>
<feature type="binding site" evidence="1">
    <location>
        <position position="48"/>
    </location>
    <ligand>
        <name>UDP-N-acetyl-alpha-D-muramoyl-L-alanyl-D-glutamate</name>
        <dbReference type="ChEBI" id="CHEBI:83900"/>
    </ligand>
</feature>
<feature type="binding site" evidence="1">
    <location>
        <begin position="134"/>
        <end position="140"/>
    </location>
    <ligand>
        <name>ATP</name>
        <dbReference type="ChEBI" id="CHEBI:30616"/>
    </ligand>
</feature>
<feature type="binding site" evidence="1">
    <location>
        <begin position="176"/>
        <end position="177"/>
    </location>
    <ligand>
        <name>UDP-N-acetyl-alpha-D-muramoyl-L-alanyl-D-glutamate</name>
        <dbReference type="ChEBI" id="CHEBI:83900"/>
    </ligand>
</feature>
<feature type="binding site" evidence="1">
    <location>
        <position position="203"/>
    </location>
    <ligand>
        <name>UDP-N-acetyl-alpha-D-muramoyl-L-alanyl-D-glutamate</name>
        <dbReference type="ChEBI" id="CHEBI:83900"/>
    </ligand>
</feature>
<feature type="binding site" evidence="1">
    <location>
        <position position="211"/>
    </location>
    <ligand>
        <name>UDP-N-acetyl-alpha-D-muramoyl-L-alanyl-D-glutamate</name>
        <dbReference type="ChEBI" id="CHEBI:83900"/>
    </ligand>
</feature>
<feature type="binding site" evidence="1">
    <location>
        <position position="405"/>
    </location>
    <ligand>
        <name>meso-2,6-diaminopimelate</name>
        <dbReference type="ChEBI" id="CHEBI:57791"/>
    </ligand>
</feature>
<feature type="binding site" evidence="1">
    <location>
        <begin position="429"/>
        <end position="432"/>
    </location>
    <ligand>
        <name>meso-2,6-diaminopimelate</name>
        <dbReference type="ChEBI" id="CHEBI:57791"/>
    </ligand>
</feature>
<feature type="binding site" evidence="1">
    <location>
        <position position="483"/>
    </location>
    <ligand>
        <name>meso-2,6-diaminopimelate</name>
        <dbReference type="ChEBI" id="CHEBI:57791"/>
    </ligand>
</feature>
<feature type="binding site" evidence="1">
    <location>
        <position position="487"/>
    </location>
    <ligand>
        <name>meso-2,6-diaminopimelate</name>
        <dbReference type="ChEBI" id="CHEBI:57791"/>
    </ligand>
</feature>
<feature type="modified residue" description="N6-carboxylysine" evidence="1">
    <location>
        <position position="243"/>
    </location>
</feature>
<sequence>MVSVPTGLRPSAVPGVRLPALADQVGAVMAGPDRRAAVPDVTVTGVTLRAQDVLPGDLFAALPGATTHGARHAAEAIERGAVAVLTDAAGVAQLTGGRTTPTLLHPRPRSVLGQLAAAVYAHPSERLTVIGITGTSGKTTTTYLVESGLRAAGRTAGLIGTVGIRIDGADIPSALTTPEAPALQALLAAMAEQRVDTVVMEVSSHALALGRVDGTRFAVGGFTNLSRDHLDFHPTMADYFEAKALLFDPNSPLRAHRAVVCIDDEAGREMAARAGDAVTVSAEGQPAHWRAVEVAPLGTGGQQFTVIDPAGVQHRAGIRLPGHYNVANCLVALALLDAVGVSPEQAAPGLLQTRVPGRMEEIDAGQDFLALVDYAHKPGALRAVLSSLKRPDRRLAVVFGAGGERDPGKRAPMGATAAELADLVVVTDDNPRGEDPAAIRREILAGVTESGCAAEVVEIGDRRAAIRHAVAWAGPGDVVLVAGKGHETGQRTGEHTRPFDDRVELAEALREAVGPRKAQG</sequence>
<dbReference type="EC" id="6.3.2.13" evidence="1"/>
<dbReference type="EMBL" id="AE016958">
    <property type="protein sequence ID" value="AAS04219.1"/>
    <property type="molecule type" value="Genomic_DNA"/>
</dbReference>
<dbReference type="RefSeq" id="WP_003872231.1">
    <property type="nucleotide sequence ID" value="NC_002944.2"/>
</dbReference>
<dbReference type="SMR" id="Q73YQ3"/>
<dbReference type="STRING" id="262316.MAP_1902c"/>
<dbReference type="KEGG" id="mpa:MAP_1902c"/>
<dbReference type="PATRIC" id="fig|262316.17.peg.2016"/>
<dbReference type="eggNOG" id="COG0769">
    <property type="taxonomic scope" value="Bacteria"/>
</dbReference>
<dbReference type="HOGENOM" id="CLU_022291_4_1_11"/>
<dbReference type="UniPathway" id="UPA00219"/>
<dbReference type="Proteomes" id="UP000000580">
    <property type="component" value="Chromosome"/>
</dbReference>
<dbReference type="GO" id="GO:0005737">
    <property type="term" value="C:cytoplasm"/>
    <property type="evidence" value="ECO:0007669"/>
    <property type="project" value="UniProtKB-SubCell"/>
</dbReference>
<dbReference type="GO" id="GO:0005524">
    <property type="term" value="F:ATP binding"/>
    <property type="evidence" value="ECO:0007669"/>
    <property type="project" value="UniProtKB-UniRule"/>
</dbReference>
<dbReference type="GO" id="GO:0000287">
    <property type="term" value="F:magnesium ion binding"/>
    <property type="evidence" value="ECO:0007669"/>
    <property type="project" value="UniProtKB-UniRule"/>
</dbReference>
<dbReference type="GO" id="GO:0008765">
    <property type="term" value="F:UDP-N-acetylmuramoylalanyl-D-glutamate-2,6-diaminopimelate ligase activity"/>
    <property type="evidence" value="ECO:0007669"/>
    <property type="project" value="UniProtKB-UniRule"/>
</dbReference>
<dbReference type="GO" id="GO:0051301">
    <property type="term" value="P:cell division"/>
    <property type="evidence" value="ECO:0007669"/>
    <property type="project" value="UniProtKB-KW"/>
</dbReference>
<dbReference type="GO" id="GO:0071555">
    <property type="term" value="P:cell wall organization"/>
    <property type="evidence" value="ECO:0007669"/>
    <property type="project" value="UniProtKB-KW"/>
</dbReference>
<dbReference type="GO" id="GO:0009252">
    <property type="term" value="P:peptidoglycan biosynthetic process"/>
    <property type="evidence" value="ECO:0007669"/>
    <property type="project" value="UniProtKB-UniRule"/>
</dbReference>
<dbReference type="GO" id="GO:0008360">
    <property type="term" value="P:regulation of cell shape"/>
    <property type="evidence" value="ECO:0007669"/>
    <property type="project" value="UniProtKB-KW"/>
</dbReference>
<dbReference type="Gene3D" id="3.90.190.20">
    <property type="entry name" value="Mur ligase, C-terminal domain"/>
    <property type="match status" value="1"/>
</dbReference>
<dbReference type="Gene3D" id="3.40.1190.10">
    <property type="entry name" value="Mur-like, catalytic domain"/>
    <property type="match status" value="1"/>
</dbReference>
<dbReference type="Gene3D" id="3.40.1390.10">
    <property type="entry name" value="MurE/MurF, N-terminal domain"/>
    <property type="match status" value="1"/>
</dbReference>
<dbReference type="HAMAP" id="MF_00208">
    <property type="entry name" value="MurE"/>
    <property type="match status" value="1"/>
</dbReference>
<dbReference type="InterPro" id="IPR036565">
    <property type="entry name" value="Mur-like_cat_sf"/>
</dbReference>
<dbReference type="InterPro" id="IPR004101">
    <property type="entry name" value="Mur_ligase_C"/>
</dbReference>
<dbReference type="InterPro" id="IPR036615">
    <property type="entry name" value="Mur_ligase_C_dom_sf"/>
</dbReference>
<dbReference type="InterPro" id="IPR013221">
    <property type="entry name" value="Mur_ligase_cen"/>
</dbReference>
<dbReference type="InterPro" id="IPR000713">
    <property type="entry name" value="Mur_ligase_N"/>
</dbReference>
<dbReference type="InterPro" id="IPR035911">
    <property type="entry name" value="MurE/MurF_N"/>
</dbReference>
<dbReference type="InterPro" id="IPR005761">
    <property type="entry name" value="UDP-N-AcMur-Glu-dNH2Pim_ligase"/>
</dbReference>
<dbReference type="NCBIfam" id="TIGR01085">
    <property type="entry name" value="murE"/>
    <property type="match status" value="1"/>
</dbReference>
<dbReference type="NCBIfam" id="NF001124">
    <property type="entry name" value="PRK00139.1-2"/>
    <property type="match status" value="1"/>
</dbReference>
<dbReference type="NCBIfam" id="NF001126">
    <property type="entry name" value="PRK00139.1-4"/>
    <property type="match status" value="1"/>
</dbReference>
<dbReference type="PANTHER" id="PTHR23135">
    <property type="entry name" value="MUR LIGASE FAMILY MEMBER"/>
    <property type="match status" value="1"/>
</dbReference>
<dbReference type="PANTHER" id="PTHR23135:SF4">
    <property type="entry name" value="UDP-N-ACETYLMURAMOYL-L-ALANYL-D-GLUTAMATE--2,6-DIAMINOPIMELATE LIGASE MURE HOMOLOG, CHLOROPLASTIC"/>
    <property type="match status" value="1"/>
</dbReference>
<dbReference type="Pfam" id="PF01225">
    <property type="entry name" value="Mur_ligase"/>
    <property type="match status" value="1"/>
</dbReference>
<dbReference type="Pfam" id="PF02875">
    <property type="entry name" value="Mur_ligase_C"/>
    <property type="match status" value="1"/>
</dbReference>
<dbReference type="Pfam" id="PF08245">
    <property type="entry name" value="Mur_ligase_M"/>
    <property type="match status" value="1"/>
</dbReference>
<dbReference type="SUPFAM" id="SSF53623">
    <property type="entry name" value="MurD-like peptide ligases, catalytic domain"/>
    <property type="match status" value="1"/>
</dbReference>
<dbReference type="SUPFAM" id="SSF53244">
    <property type="entry name" value="MurD-like peptide ligases, peptide-binding domain"/>
    <property type="match status" value="1"/>
</dbReference>
<dbReference type="SUPFAM" id="SSF63418">
    <property type="entry name" value="MurE/MurF N-terminal domain"/>
    <property type="match status" value="1"/>
</dbReference>
<proteinExistence type="inferred from homology"/>
<name>MURE_MYCPA</name>
<comment type="function">
    <text evidence="1">Catalyzes the addition of meso-diaminopimelic acid to the nucleotide precursor UDP-N-acetylmuramoyl-L-alanyl-D-glutamate (UMAG) in the biosynthesis of bacterial cell-wall peptidoglycan.</text>
</comment>
<comment type="catalytic activity">
    <reaction evidence="1">
        <text>UDP-N-acetyl-alpha-D-muramoyl-L-alanyl-D-glutamate + meso-2,6-diaminopimelate + ATP = UDP-N-acetyl-alpha-D-muramoyl-L-alanyl-gamma-D-glutamyl-meso-2,6-diaminopimelate + ADP + phosphate + H(+)</text>
        <dbReference type="Rhea" id="RHEA:23676"/>
        <dbReference type="ChEBI" id="CHEBI:15378"/>
        <dbReference type="ChEBI" id="CHEBI:30616"/>
        <dbReference type="ChEBI" id="CHEBI:43474"/>
        <dbReference type="ChEBI" id="CHEBI:57791"/>
        <dbReference type="ChEBI" id="CHEBI:83900"/>
        <dbReference type="ChEBI" id="CHEBI:83905"/>
        <dbReference type="ChEBI" id="CHEBI:456216"/>
        <dbReference type="EC" id="6.3.2.13"/>
    </reaction>
</comment>
<comment type="cofactor">
    <cofactor evidence="1">
        <name>Mg(2+)</name>
        <dbReference type="ChEBI" id="CHEBI:18420"/>
    </cofactor>
</comment>
<comment type="pathway">
    <text evidence="1">Cell wall biogenesis; peptidoglycan biosynthesis.</text>
</comment>
<comment type="subcellular location">
    <subcellularLocation>
        <location evidence="1">Cytoplasm</location>
    </subcellularLocation>
</comment>
<comment type="PTM">
    <text evidence="1">Carboxylation is probably crucial for Mg(2+) binding and, consequently, for the gamma-phosphate positioning of ATP.</text>
</comment>
<comment type="similarity">
    <text evidence="1">Belongs to the MurCDEF family. MurE subfamily.</text>
</comment>
<keyword id="KW-0067">ATP-binding</keyword>
<keyword id="KW-0131">Cell cycle</keyword>
<keyword id="KW-0132">Cell division</keyword>
<keyword id="KW-0133">Cell shape</keyword>
<keyword id="KW-0961">Cell wall biogenesis/degradation</keyword>
<keyword id="KW-0963">Cytoplasm</keyword>
<keyword id="KW-0436">Ligase</keyword>
<keyword id="KW-0460">Magnesium</keyword>
<keyword id="KW-0547">Nucleotide-binding</keyword>
<keyword id="KW-0573">Peptidoglycan synthesis</keyword>
<keyword id="KW-1185">Reference proteome</keyword>
<reference key="1">
    <citation type="journal article" date="2005" name="Proc. Natl. Acad. Sci. U.S.A.">
        <title>The complete genome sequence of Mycobacterium avium subspecies paratuberculosis.</title>
        <authorList>
            <person name="Li L."/>
            <person name="Bannantine J.P."/>
            <person name="Zhang Q."/>
            <person name="Amonsin A."/>
            <person name="May B.J."/>
            <person name="Alt D."/>
            <person name="Banerji N."/>
            <person name="Kanjilal S."/>
            <person name="Kapur V."/>
        </authorList>
    </citation>
    <scope>NUCLEOTIDE SEQUENCE [LARGE SCALE GENOMIC DNA]</scope>
    <source>
        <strain>ATCC BAA-968 / K-10</strain>
    </source>
</reference>
<protein>
    <recommendedName>
        <fullName evidence="1">UDP-N-acetylmuramoyl-L-alanyl-D-glutamate--2,6-diaminopimelate ligase</fullName>
        <ecNumber evidence="1">6.3.2.13</ecNumber>
    </recommendedName>
    <alternativeName>
        <fullName evidence="1">Meso-A2pm-adding enzyme</fullName>
    </alternativeName>
    <alternativeName>
        <fullName evidence="1">Meso-diaminopimelate-adding enzyme</fullName>
    </alternativeName>
    <alternativeName>
        <fullName evidence="1">UDP-MurNAc-L-Ala-D-Glu:meso-diaminopimelate ligase</fullName>
    </alternativeName>
    <alternativeName>
        <fullName evidence="1">UDP-MurNAc-tripeptide synthetase</fullName>
    </alternativeName>
    <alternativeName>
        <fullName evidence="1">UDP-N-acetylmuramyl-tripeptide synthetase</fullName>
    </alternativeName>
</protein>